<organism>
    <name type="scientific">Synechococcus sp. (strain JA-2-3B'a(2-13))</name>
    <name type="common">Cyanobacteria bacterium Yellowstone B-Prime</name>
    <dbReference type="NCBI Taxonomy" id="321332"/>
    <lineage>
        <taxon>Bacteria</taxon>
        <taxon>Bacillati</taxon>
        <taxon>Cyanobacteriota</taxon>
        <taxon>Cyanophyceae</taxon>
        <taxon>Synechococcales</taxon>
        <taxon>Synechococcaceae</taxon>
        <taxon>Synechococcus</taxon>
    </lineage>
</organism>
<evidence type="ECO:0000255" key="1">
    <source>
        <dbReference type="HAMAP-Rule" id="MF_00272"/>
    </source>
</evidence>
<evidence type="ECO:0000255" key="2">
    <source>
        <dbReference type="PROSITE-ProRule" id="PRU01066"/>
    </source>
</evidence>
<dbReference type="EMBL" id="CP000240">
    <property type="protein sequence ID" value="ABD01344.1"/>
    <property type="molecule type" value="Genomic_DNA"/>
</dbReference>
<dbReference type="RefSeq" id="WP_011432013.1">
    <property type="nucleotide sequence ID" value="NC_007776.1"/>
</dbReference>
<dbReference type="SMR" id="Q2JPE6"/>
<dbReference type="STRING" id="321332.CYB_0348"/>
<dbReference type="KEGG" id="cyb:CYB_0348"/>
<dbReference type="eggNOG" id="COG0509">
    <property type="taxonomic scope" value="Bacteria"/>
</dbReference>
<dbReference type="HOGENOM" id="CLU_097408_2_2_3"/>
<dbReference type="OrthoDB" id="9796712at2"/>
<dbReference type="Proteomes" id="UP000001938">
    <property type="component" value="Chromosome"/>
</dbReference>
<dbReference type="GO" id="GO:0005829">
    <property type="term" value="C:cytosol"/>
    <property type="evidence" value="ECO:0007669"/>
    <property type="project" value="TreeGrafter"/>
</dbReference>
<dbReference type="GO" id="GO:0005960">
    <property type="term" value="C:glycine cleavage complex"/>
    <property type="evidence" value="ECO:0007669"/>
    <property type="project" value="InterPro"/>
</dbReference>
<dbReference type="GO" id="GO:0019464">
    <property type="term" value="P:glycine decarboxylation via glycine cleavage system"/>
    <property type="evidence" value="ECO:0007669"/>
    <property type="project" value="UniProtKB-UniRule"/>
</dbReference>
<dbReference type="CDD" id="cd06848">
    <property type="entry name" value="GCS_H"/>
    <property type="match status" value="1"/>
</dbReference>
<dbReference type="Gene3D" id="2.40.50.100">
    <property type="match status" value="1"/>
</dbReference>
<dbReference type="HAMAP" id="MF_00272">
    <property type="entry name" value="GcvH"/>
    <property type="match status" value="1"/>
</dbReference>
<dbReference type="InterPro" id="IPR003016">
    <property type="entry name" value="2-oxoA_DH_lipoyl-BS"/>
</dbReference>
<dbReference type="InterPro" id="IPR000089">
    <property type="entry name" value="Biotin_lipoyl"/>
</dbReference>
<dbReference type="InterPro" id="IPR002930">
    <property type="entry name" value="GCV_H"/>
</dbReference>
<dbReference type="InterPro" id="IPR033753">
    <property type="entry name" value="GCV_H/Fam206"/>
</dbReference>
<dbReference type="InterPro" id="IPR017453">
    <property type="entry name" value="GCV_H_sub"/>
</dbReference>
<dbReference type="InterPro" id="IPR011053">
    <property type="entry name" value="Single_hybrid_motif"/>
</dbReference>
<dbReference type="NCBIfam" id="TIGR00527">
    <property type="entry name" value="gcvH"/>
    <property type="match status" value="1"/>
</dbReference>
<dbReference type="NCBIfam" id="NF002270">
    <property type="entry name" value="PRK01202.1"/>
    <property type="match status" value="1"/>
</dbReference>
<dbReference type="PANTHER" id="PTHR11715">
    <property type="entry name" value="GLYCINE CLEAVAGE SYSTEM H PROTEIN"/>
    <property type="match status" value="1"/>
</dbReference>
<dbReference type="PANTHER" id="PTHR11715:SF3">
    <property type="entry name" value="GLYCINE CLEAVAGE SYSTEM H PROTEIN-RELATED"/>
    <property type="match status" value="1"/>
</dbReference>
<dbReference type="Pfam" id="PF01597">
    <property type="entry name" value="GCV_H"/>
    <property type="match status" value="1"/>
</dbReference>
<dbReference type="SUPFAM" id="SSF51230">
    <property type="entry name" value="Single hybrid motif"/>
    <property type="match status" value="1"/>
</dbReference>
<dbReference type="PROSITE" id="PS50968">
    <property type="entry name" value="BIOTINYL_LIPOYL"/>
    <property type="match status" value="1"/>
</dbReference>
<dbReference type="PROSITE" id="PS00189">
    <property type="entry name" value="LIPOYL"/>
    <property type="match status" value="1"/>
</dbReference>
<keyword id="KW-0450">Lipoyl</keyword>
<keyword id="KW-1185">Reference proteome</keyword>
<name>GCSH_SYNJB</name>
<feature type="chain" id="PRO_0000302451" description="Glycine cleavage system H protein">
    <location>
        <begin position="1"/>
        <end position="129"/>
    </location>
</feature>
<feature type="domain" description="Lipoyl-binding" evidence="2">
    <location>
        <begin position="24"/>
        <end position="106"/>
    </location>
</feature>
<feature type="modified residue" description="N6-lipoyllysine" evidence="1">
    <location>
        <position position="65"/>
    </location>
</feature>
<accession>Q2JPE6</accession>
<proteinExistence type="inferred from homology"/>
<gene>
    <name evidence="1" type="primary">gcvH</name>
    <name type="ordered locus">CYB_0348</name>
</gene>
<comment type="function">
    <text evidence="1">The glycine cleavage system catalyzes the degradation of glycine. The H protein shuttles the methylamine group of glycine from the P protein to the T protein.</text>
</comment>
<comment type="cofactor">
    <cofactor evidence="1">
        <name>(R)-lipoate</name>
        <dbReference type="ChEBI" id="CHEBI:83088"/>
    </cofactor>
    <text evidence="1">Binds 1 lipoyl cofactor covalently.</text>
</comment>
<comment type="subunit">
    <text evidence="1">The glycine cleavage system is composed of four proteins: P, T, L and H.</text>
</comment>
<comment type="similarity">
    <text evidence="1">Belongs to the GcvH family.</text>
</comment>
<reference key="1">
    <citation type="journal article" date="2007" name="ISME J.">
        <title>Population level functional diversity in a microbial community revealed by comparative genomic and metagenomic analyses.</title>
        <authorList>
            <person name="Bhaya D."/>
            <person name="Grossman A.R."/>
            <person name="Steunou A.-S."/>
            <person name="Khuri N."/>
            <person name="Cohan F.M."/>
            <person name="Hamamura N."/>
            <person name="Melendrez M.C."/>
            <person name="Bateson M.M."/>
            <person name="Ward D.M."/>
            <person name="Heidelberg J.F."/>
        </authorList>
    </citation>
    <scope>NUCLEOTIDE SEQUENCE [LARGE SCALE GENOMIC DNA]</scope>
    <source>
        <strain>JA-2-3B'a(2-13)</strain>
    </source>
</reference>
<protein>
    <recommendedName>
        <fullName evidence="1">Glycine cleavage system H protein</fullName>
    </recommendedName>
</protein>
<sequence>MALEYPSHLRYVDTHEYIHVEDDIAVIGITAYAVDQLGDIVFVGLPEEGTEIEKGESFGSVESVKAVEDLYAPLSGEVVAVNTAVVESPESLADDPYGDGWLIKVRIANPEDLEDTMSAEAYASLVEGS</sequence>